<protein>
    <recommendedName>
        <fullName evidence="13">Minor fimbrium subunit Mfa1</fullName>
    </recommendedName>
    <alternativeName>
        <fullName evidence="13">Pg-II fim a</fullName>
    </alternativeName>
</protein>
<proteinExistence type="evidence at protein level"/>
<name>MFA1_PORG3</name>
<dbReference type="EMBL" id="AP009380">
    <property type="protein sequence ID" value="BAG32806.1"/>
    <property type="molecule type" value="Genomic_DNA"/>
</dbReference>
<dbReference type="RefSeq" id="WP_012457396.1">
    <property type="nucleotide sequence ID" value="NC_010729.1"/>
</dbReference>
<dbReference type="PDB" id="5NF2">
    <property type="method" value="X-ray"/>
    <property type="resolution" value="1.73 A"/>
    <property type="chains" value="A=65-563"/>
</dbReference>
<dbReference type="PDB" id="5NF3">
    <property type="method" value="X-ray"/>
    <property type="resolution" value="1.97 A"/>
    <property type="chains" value="A=32-554"/>
</dbReference>
<dbReference type="PDBsum" id="5NF2"/>
<dbReference type="PDBsum" id="5NF3"/>
<dbReference type="SMR" id="B2RHG1"/>
<dbReference type="GeneID" id="29255533"/>
<dbReference type="KEGG" id="pgn:PGN_0287"/>
<dbReference type="eggNOG" id="ENOG50339MN">
    <property type="taxonomic scope" value="Bacteria"/>
</dbReference>
<dbReference type="HOGENOM" id="CLU_492390_0_0_10"/>
<dbReference type="OrthoDB" id="1014669at2"/>
<dbReference type="BioCyc" id="PGIN431947:G1G2V-314-MONOMER"/>
<dbReference type="Proteomes" id="UP000008842">
    <property type="component" value="Chromosome"/>
</dbReference>
<dbReference type="GO" id="GO:0009279">
    <property type="term" value="C:cell outer membrane"/>
    <property type="evidence" value="ECO:0007669"/>
    <property type="project" value="UniProtKB-SubCell"/>
</dbReference>
<dbReference type="GO" id="GO:0019867">
    <property type="term" value="C:outer membrane"/>
    <property type="evidence" value="ECO:0000314"/>
    <property type="project" value="UniProtKB"/>
</dbReference>
<dbReference type="GO" id="GO:0009418">
    <property type="term" value="C:pilus shaft"/>
    <property type="evidence" value="ECO:0000315"/>
    <property type="project" value="UniProtKB"/>
</dbReference>
<dbReference type="GO" id="GO:0098609">
    <property type="term" value="P:cell-cell adhesion"/>
    <property type="evidence" value="ECO:0000314"/>
    <property type="project" value="UniProtKB"/>
</dbReference>
<dbReference type="Gene3D" id="2.60.40.3690">
    <property type="match status" value="1"/>
</dbReference>
<dbReference type="InterPro" id="IPR029140">
    <property type="entry name" value="Mfa1_C"/>
</dbReference>
<dbReference type="InterPro" id="IPR047786">
    <property type="entry name" value="Mfa1_fim"/>
</dbReference>
<dbReference type="NCBIfam" id="NF038041">
    <property type="entry name" value="fim_Mfa1_fam"/>
    <property type="match status" value="1"/>
</dbReference>
<dbReference type="Pfam" id="PF15495">
    <property type="entry name" value="Fimbrillin_C"/>
    <property type="match status" value="1"/>
</dbReference>
<dbReference type="PROSITE" id="PS51257">
    <property type="entry name" value="PROKAR_LIPOPROTEIN"/>
    <property type="match status" value="1"/>
</dbReference>
<organism>
    <name type="scientific">Porphyromonas gingivalis (strain ATCC 33277 / DSM 20709 / CIP 103683 / JCM 12257 / NCTC 11834 / 2561)</name>
    <dbReference type="NCBI Taxonomy" id="431947"/>
    <lineage>
        <taxon>Bacteria</taxon>
        <taxon>Pseudomonadati</taxon>
        <taxon>Bacteroidota</taxon>
        <taxon>Bacteroidia</taxon>
        <taxon>Bacteroidales</taxon>
        <taxon>Porphyromonadaceae</taxon>
        <taxon>Porphyromonas</taxon>
    </lineage>
</organism>
<feature type="signal peptide" evidence="1">
    <location>
        <begin position="1"/>
        <end position="19"/>
    </location>
</feature>
<feature type="propeptide" id="PRO_0000436790" evidence="11">
    <location>
        <begin position="20"/>
        <end position="49"/>
    </location>
</feature>
<feature type="chain" id="PRO_0000436791" description="Minor fimbrium subunit Mfa1">
    <location>
        <begin position="50"/>
        <end position="563"/>
    </location>
</feature>
<feature type="region of interest" description="Disordered" evidence="2">
    <location>
        <begin position="504"/>
        <end position="543"/>
    </location>
</feature>
<feature type="compositionally biased region" description="Pro residues" evidence="2">
    <location>
        <begin position="505"/>
        <end position="537"/>
    </location>
</feature>
<feature type="site" description="Cleavage; by gingipain" evidence="11">
    <location>
        <begin position="49"/>
        <end position="50"/>
    </location>
</feature>
<feature type="lipid moiety-binding region" description="N-palmitoyl cysteine" evidence="1">
    <location>
        <position position="20"/>
    </location>
</feature>
<feature type="lipid moiety-binding region" description="S-diacylglycerol cysteine" evidence="1">
    <location>
        <position position="20"/>
    </location>
</feature>
<feature type="strand" evidence="22">
    <location>
        <begin position="34"/>
        <end position="42"/>
    </location>
</feature>
<feature type="helix" evidence="21">
    <location>
        <begin position="66"/>
        <end position="68"/>
    </location>
</feature>
<feature type="strand" evidence="21">
    <location>
        <begin position="75"/>
        <end position="82"/>
    </location>
</feature>
<feature type="strand" evidence="21">
    <location>
        <begin position="84"/>
        <end position="86"/>
    </location>
</feature>
<feature type="strand" evidence="21">
    <location>
        <begin position="90"/>
        <end position="96"/>
    </location>
</feature>
<feature type="helix" evidence="21">
    <location>
        <begin position="97"/>
        <end position="100"/>
    </location>
</feature>
<feature type="strand" evidence="21">
    <location>
        <begin position="105"/>
        <end position="107"/>
    </location>
</feature>
<feature type="turn" evidence="21">
    <location>
        <begin position="108"/>
        <end position="111"/>
    </location>
</feature>
<feature type="strand" evidence="21">
    <location>
        <begin position="112"/>
        <end position="115"/>
    </location>
</feature>
<feature type="strand" evidence="21">
    <location>
        <begin position="117"/>
        <end position="119"/>
    </location>
</feature>
<feature type="helix" evidence="21">
    <location>
        <begin position="124"/>
        <end position="126"/>
    </location>
</feature>
<feature type="strand" evidence="21">
    <location>
        <begin position="129"/>
        <end position="137"/>
    </location>
</feature>
<feature type="helix" evidence="21">
    <location>
        <begin position="143"/>
        <end position="148"/>
    </location>
</feature>
<feature type="helix" evidence="21">
    <location>
        <begin position="153"/>
        <end position="159"/>
    </location>
</feature>
<feature type="strand" evidence="21">
    <location>
        <begin position="162"/>
        <end position="167"/>
    </location>
</feature>
<feature type="turn" evidence="21">
    <location>
        <begin position="169"/>
        <end position="172"/>
    </location>
</feature>
<feature type="helix" evidence="21">
    <location>
        <begin position="176"/>
        <end position="178"/>
    </location>
</feature>
<feature type="helix" evidence="21">
    <location>
        <begin position="186"/>
        <end position="188"/>
    </location>
</feature>
<feature type="strand" evidence="21">
    <location>
        <begin position="189"/>
        <end position="193"/>
    </location>
</feature>
<feature type="turn" evidence="21">
    <location>
        <begin position="194"/>
        <end position="196"/>
    </location>
</feature>
<feature type="strand" evidence="21">
    <location>
        <begin position="197"/>
        <end position="200"/>
    </location>
</feature>
<feature type="strand" evidence="22">
    <location>
        <begin position="202"/>
        <end position="206"/>
    </location>
</feature>
<feature type="helix" evidence="22">
    <location>
        <begin position="219"/>
        <end position="223"/>
    </location>
</feature>
<feature type="strand" evidence="21">
    <location>
        <begin position="231"/>
        <end position="237"/>
    </location>
</feature>
<feature type="strand" evidence="21">
    <location>
        <begin position="239"/>
        <end position="246"/>
    </location>
</feature>
<feature type="strand" evidence="21">
    <location>
        <begin position="250"/>
        <end position="253"/>
    </location>
</feature>
<feature type="strand" evidence="21">
    <location>
        <begin position="265"/>
        <end position="278"/>
    </location>
</feature>
<feature type="strand" evidence="21">
    <location>
        <begin position="280"/>
        <end position="287"/>
    </location>
</feature>
<feature type="strand" evidence="21">
    <location>
        <begin position="297"/>
        <end position="299"/>
    </location>
</feature>
<feature type="turn" evidence="21">
    <location>
        <begin position="301"/>
        <end position="304"/>
    </location>
</feature>
<feature type="helix" evidence="21">
    <location>
        <begin position="311"/>
        <end position="315"/>
    </location>
</feature>
<feature type="helix" evidence="21">
    <location>
        <begin position="316"/>
        <end position="318"/>
    </location>
</feature>
<feature type="helix" evidence="21">
    <location>
        <begin position="323"/>
        <end position="326"/>
    </location>
</feature>
<feature type="strand" evidence="21">
    <location>
        <begin position="338"/>
        <end position="340"/>
    </location>
</feature>
<feature type="helix" evidence="21">
    <location>
        <begin position="345"/>
        <end position="348"/>
    </location>
</feature>
<feature type="helix" evidence="21">
    <location>
        <begin position="354"/>
        <end position="360"/>
    </location>
</feature>
<feature type="strand" evidence="21">
    <location>
        <begin position="363"/>
        <end position="365"/>
    </location>
</feature>
<feature type="turn" evidence="21">
    <location>
        <begin position="376"/>
        <end position="378"/>
    </location>
</feature>
<feature type="turn" evidence="21">
    <location>
        <begin position="383"/>
        <end position="385"/>
    </location>
</feature>
<feature type="strand" evidence="21">
    <location>
        <begin position="388"/>
        <end position="397"/>
    </location>
</feature>
<feature type="helix" evidence="21">
    <location>
        <begin position="399"/>
        <end position="401"/>
    </location>
</feature>
<feature type="turn" evidence="21">
    <location>
        <begin position="403"/>
        <end position="406"/>
    </location>
</feature>
<feature type="strand" evidence="21">
    <location>
        <begin position="424"/>
        <end position="427"/>
    </location>
</feature>
<feature type="strand" evidence="21">
    <location>
        <begin position="432"/>
        <end position="435"/>
    </location>
</feature>
<feature type="helix" evidence="21">
    <location>
        <begin position="436"/>
        <end position="439"/>
    </location>
</feature>
<feature type="helix" evidence="21">
    <location>
        <begin position="442"/>
        <end position="444"/>
    </location>
</feature>
<feature type="strand" evidence="21">
    <location>
        <begin position="452"/>
        <end position="455"/>
    </location>
</feature>
<feature type="helix" evidence="21">
    <location>
        <begin position="456"/>
        <end position="458"/>
    </location>
</feature>
<feature type="strand" evidence="21">
    <location>
        <begin position="459"/>
        <end position="467"/>
    </location>
</feature>
<feature type="strand" evidence="21">
    <location>
        <begin position="472"/>
        <end position="474"/>
    </location>
</feature>
<feature type="strand" evidence="21">
    <location>
        <begin position="486"/>
        <end position="494"/>
    </location>
</feature>
<feature type="strand" evidence="21">
    <location>
        <begin position="499"/>
        <end position="501"/>
    </location>
</feature>
<feature type="strand" evidence="21">
    <location>
        <begin position="544"/>
        <end position="552"/>
    </location>
</feature>
<feature type="strand" evidence="21">
    <location>
        <begin position="559"/>
        <end position="562"/>
    </location>
</feature>
<keyword id="KW-0002">3D-structure</keyword>
<keyword id="KW-0998">Cell outer membrane</keyword>
<keyword id="KW-0903">Direct protein sequencing</keyword>
<keyword id="KW-0281">Fimbrium</keyword>
<keyword id="KW-0449">Lipoprotein</keyword>
<keyword id="KW-0472">Membrane</keyword>
<keyword id="KW-0564">Palmitate</keyword>
<keyword id="KW-0732">Signal</keyword>
<keyword id="KW-0843">Virulence</keyword>
<reference evidence="19 20" key="1">
    <citation type="journal article" date="2008" name="DNA Res.">
        <title>Determination of the genome sequence of Porphyromonas gingivalis strain ATCC 33277 and genomic comparison with strain W83 revealed extensive genome rearrangements in P. gingivalis.</title>
        <authorList>
            <person name="Naito M."/>
            <person name="Hirakawa H."/>
            <person name="Yamashita A."/>
            <person name="Ohara N."/>
            <person name="Shoji M."/>
            <person name="Yukitake H."/>
            <person name="Nakayama K."/>
            <person name="Toh H."/>
            <person name="Yoshimura F."/>
            <person name="Kuhara S."/>
            <person name="Hattori M."/>
            <person name="Hayashi T."/>
            <person name="Nakayama K."/>
        </authorList>
    </citation>
    <scope>NUCLEOTIDE SEQUENCE [LARGE SCALE GENOMIC DNA]</scope>
    <source>
        <strain evidence="20">ATCC 33277 / DSM 20709 / CIP 103683 / JCM 12257 / NCTC 11834 / 2561</strain>
    </source>
</reference>
<reference key="2">
    <citation type="journal article" date="1998" name="J. Biol. Chem.">
        <title>Arg-gingipain acts as a major processing enzyme for various cell surface proteins in Porphyromonas gingivalis.</title>
        <authorList>
            <person name="Kadowaki T."/>
            <person name="Nakayama K."/>
            <person name="Yoshimura F."/>
            <person name="Okamoto K."/>
            <person name="Abe N."/>
            <person name="Yamamoto K."/>
        </authorList>
    </citation>
    <scope>PROTEIN SEQUENCE OF 50-60</scope>
    <scope>PROTEOLYTIC PROCESSING</scope>
    <scope>SUBCELLULAR LOCATION</scope>
</reference>
<reference key="3">
    <citation type="journal article" date="2000" name="Infect. Immun.">
        <title>Identification of a Porphyromonas gingivalis receptor for the Streptococcus gordonii SspB protein.</title>
        <authorList>
            <person name="Chung W.O."/>
            <person name="Demuth D.R."/>
            <person name="Lamont R.J."/>
        </authorList>
    </citation>
    <scope>PROTEIN SEQUENCE OF 460-475</scope>
    <scope>FUNCTION</scope>
    <scope>INTERACTION WITH S.GORDONII SSP5</scope>
    <scope>SUBCELLULAR LOCATION</scope>
</reference>
<reference key="4">
    <citation type="journal article" date="2003" name="J. Periodontology">
        <title>Characterization of biologically active cell surface components of a periodontal pathogen. The roles of major and minor fimbriae of Porphyromonas gingivalis.</title>
        <authorList>
            <person name="Umemoto T."/>
            <person name="Hamada N."/>
        </authorList>
    </citation>
    <scope>FUNCTION</scope>
    <scope>DISRUPTION PHENOTYPE</scope>
    <source>
        <strain evidence="12">ATCC 33277 / DSM 20709 / CIP 103683 / JCM 12257 / NCTC 11834 / 2561</strain>
    </source>
</reference>
<reference key="5">
    <citation type="journal article" date="2005" name="Infect. Immun.">
        <title>Short fimbriae of Porphyromonas gingivalis and their role in coadhesion with Streptococcus gordonii.</title>
        <authorList>
            <person name="Park Y."/>
            <person name="Simionato M.R."/>
            <person name="Sekiya K."/>
            <person name="Murakami Y."/>
            <person name="James D."/>
            <person name="Chen W."/>
            <person name="Hackett M."/>
            <person name="Yoshimura F."/>
            <person name="Demuth D.R."/>
            <person name="Lamont R.J."/>
        </authorList>
    </citation>
    <scope>FUNCTION</scope>
    <scope>INTERACTION WITH S.GORDONII SSP5</scope>
    <scope>SUBCELLULAR LOCATION</scope>
</reference>
<reference key="6">
    <citation type="journal article" date="2009" name="Microbiology">
        <title>Anchoring and length regulation of Porphyromonas gingivalis Mfa1 fimbriae by the downstream gene product Mfa2.</title>
        <authorList>
            <person name="Hasegawa Y."/>
            <person name="Iwami J."/>
            <person name="Sato K."/>
            <person name="Park Y."/>
            <person name="Nishikawa K."/>
            <person name="Atsumi T."/>
            <person name="Moriguchi K."/>
            <person name="Murakami Y."/>
            <person name="Lamont R.J."/>
            <person name="Nakamura H."/>
            <person name="Ohno N."/>
            <person name="Yoshimura F."/>
        </authorList>
    </citation>
    <scope>FUNCTION</scope>
    <scope>SUBCELLULAR LOCATION</scope>
    <scope>SUBUNIT</scope>
    <scope>INTERACTION WITH MFA2</scope>
    <scope>IDENTIFICATION BY MASS SPECTROMETRY</scope>
    <source>
        <strain evidence="13">ATCC 33277 / DSM 20709 / CIP 103683 / JCM 12257 / NCTC 11834 / 2561</strain>
    </source>
</reference>
<reference key="7">
    <citation type="journal article" date="2013" name="Mol. Oral. Microbiol.">
        <title>Genetic and antigenic analyses of Porphyromonas gingivalis FimA fimbriae.</title>
        <authorList>
            <person name="Nagano K."/>
            <person name="Abiko Y."/>
            <person name="Yoshida Y."/>
            <person name="Yoshimura F."/>
        </authorList>
    </citation>
    <scope>FUNCTION</scope>
    <scope>SUBCELLULAR LOCATION</scope>
    <scope>CLASSIFICATION</scope>
</reference>
<reference key="8">
    <citation type="journal article" date="2013" name="Mol. Oral. Microbiol.">
        <title>Localization and function of the accessory protein Mfa3 in Porphyromonas gingivalis Mfa1 fimbriae.</title>
        <authorList>
            <person name="Hasegawa Y."/>
            <person name="Nagano K."/>
            <person name="Ikai R."/>
            <person name="Izumigawa M."/>
            <person name="Yoshida Y."/>
            <person name="Kitai N."/>
            <person name="Lamont R.J."/>
            <person name="Murakami Y."/>
            <person name="Yoshimura F."/>
        </authorList>
    </citation>
    <scope>FUNCTION</scope>
    <scope>SUBCELLULAR LOCATION</scope>
    <scope>SUBUNIT</scope>
    <source>
        <strain evidence="14">ATCC 33277 / DSM 20709 / CIP 103683 / JCM 12257 / NCTC 11834 / 2561</strain>
    </source>
</reference>
<reference key="9">
    <citation type="journal article" date="2015" name="J. Dent. Res.">
        <title>A major fimbrilin variant of Mfa1 fimbriae in Porphyromonas gingivalis.</title>
        <authorList>
            <person name="Nagano K."/>
            <person name="Hasegawa Y."/>
            <person name="Yoshida Y."/>
            <person name="Yoshimura F."/>
        </authorList>
    </citation>
    <scope>FUNCTION</scope>
    <scope>SUBUNIT</scope>
    <scope>SUBCELLULAR LOCATION</scope>
    <source>
        <strain evidence="15">ATCC 33277 / DSM 20709 / CIP 103683 / JCM 12257 / NCTC 11834 / 2561</strain>
    </source>
</reference>
<reference key="10">
    <citation type="journal article" date="2015" name="PLoS ONE">
        <title>Mfa4, an accessory protein of Mfa1 fimbriae, modulates fimbrial biogenesis, cell auto-aggregation, and biofilm formation in Porphyromonas gingivalis.</title>
        <authorList>
            <person name="Ikai R."/>
            <person name="Hasegawa Y."/>
            <person name="Izumigawa M."/>
            <person name="Nagano K."/>
            <person name="Yoshida Y."/>
            <person name="Kitai N."/>
            <person name="Lamont R.J."/>
            <person name="Yoshimura F."/>
            <person name="Murakami Y."/>
        </authorList>
    </citation>
    <scope>FUNCTION</scope>
    <scope>IDENTIFICATION BY MASS SPECTROMETRY</scope>
    <scope>SUBCELLULAR LOCATION</scope>
    <scope>SUBUNIT</scope>
    <source>
        <strain evidence="16">ATCC 33277 / DSM 20709 / CIP 103683 / JCM 12257 / NCTC 11834 / 2561</strain>
    </source>
</reference>
<comment type="function">
    <text evidence="3 4 5 6 7 8 9 10 17">Structural subunit of the minor fimbriae (PubMed:12593606, PubMed:19589838, PubMed:24118823). These filamentous pili are attached to the cell surface; they mediate biofilm formation, adhesion onto host cells and onto other bacteria that are part of the oral microbiome (PubMed:11083792, PubMed:12593606, PubMed:15972485, PubMed:19589838, PubMed:23809984, PubMed:24118823, PubMed:26001707, PubMed:26437277). They play an important role in invasion of periodontal tissues and are recognized as major virulence factors. Mfa1 orthologs from different strains have highly divergent sequences, and this correlates with pathogenicity (Probable).</text>
</comment>
<comment type="subunit">
    <text evidence="3 5 6 8 9 10 17">Structural component of the fimbrial stalk. Minor fimbriae are composed of a structural subunit, most often Mfa1, and the accessory subunits Mfa3, Mfa4 and Mfa5 (PubMed:19589838, PubMed:24118823, PubMed:26001707, PubMed:26437277). Mfa1 interacts with Mfa2; this anchors the fimbrium in the membrane (PubMed:19589838). Fimbrium assembly occurs by linear, head-to-tail oligomerization of fimbrial subunits. This is mediated via insertion of a C-terminal beta-strand from one subunit into a groove in the N-terminal domain of the following subunit (Probable). Interacts with S.gordonii ssp5 (PubMed:11083792, PubMed:15972485).</text>
</comment>
<comment type="subcellular location">
    <subcellularLocation>
        <location evidence="6 7 8 9 10">Fimbrium</location>
    </subcellularLocation>
    <subcellularLocation>
        <location evidence="3 5 18">Cell outer membrane</location>
    </subcellularLocation>
    <text evidence="17">Probably synthesized as a palmitoylated precursor. Efficient export to the outer membrane and integration into fimbriae requires lipidation and subsequent proteolytic removal of the lipidated propeptide (Probable).</text>
</comment>
<comment type="disruption phenotype">
    <text evidence="4">Mfa1-deficient cells show increased autoaggregation. Double mutants lacking both FimA and Mfa1 lack major and minor fimbriae; they fail to adhere to host cells.</text>
</comment>
<comment type="miscellaneous">
    <text evidence="17">The name (minor fimbrium subunit) does not indicate the abundance of the protein, but is derived from the greater length of the major fimbriae. In strain ATCC 33277 and strain ATCC BAA-1703 / FDC 381, major fimbriae are 300 - 1600 nM in length and about 5 nm in diameter. In contrast, minor fimbriae are only about 80 - 120 nm long. This length difference is observed only in a small number of strains, including strain ATCC 33277 and strain ATCC BAA-1703 / FDC 381, and is due to a loss of function mutation in FimB, a protein that restricts fimbrial length in other strains.</text>
</comment>
<comment type="similarity">
    <text evidence="17">Belongs to the bacteroidetes fimbrillin superfamily.</text>
</comment>
<accession>B2RHG1</accession>
<gene>
    <name evidence="19" type="primary">mfa1</name>
    <name evidence="19" type="ordered locus">PGN_0287</name>
</gene>
<sequence>MKLNKMFLVGALLSLGFASCSKEGNGPDPDNAAKSYMSMTLSMPMGSARAGDGQDQANPDYHYVGEWAGKDKIEKVSIYMVPQGGPGLVESAEDLDFGTYYENPTIDPATHNAILKPKKGIKVNSAVGKTVKVYVVLNDIAGKAKALLANVNAADFDAKFKEIIELSTQAQALGTVADGPNPATAAGKIAKKNGTTDETIMMTCLQPSDALTIEAAVSEANAIAGIKNQAKVTVERSVARAMVSTKAQSYEIKATTQIGEIAAGSVLATITDIRWVVAQGERRQYLSKKRGTVPENTWVTPGSGFVPTSSTFHTNATEYYDYAGLWEDHNTNEAVISGTQVPTLADYQLQDVTGELANALSGKFLLPNTHKSGANAASSDYKRGNTAYVLVRAKFTPKKEAFIDRGKTYSDNTAVPEYVAGEDFFVGENGQFYVSMKSVTDPKVGGVAGMKAHKYVKGKVLYYAWLNPSTTSPDSWWNSPVVRNNIYHIHIKSIKKLGFNWNPLVPDPDPSNPENPNNPDPNPDEPGTPVPTDPENPLPDQDTFMSVEVTVLPWKVHSYEVDL</sequence>
<evidence type="ECO:0000255" key="1">
    <source>
        <dbReference type="PROSITE-ProRule" id="PRU00303"/>
    </source>
</evidence>
<evidence type="ECO:0000256" key="2">
    <source>
        <dbReference type="SAM" id="MobiDB-lite"/>
    </source>
</evidence>
<evidence type="ECO:0000269" key="3">
    <source>
    </source>
</evidence>
<evidence type="ECO:0000269" key="4">
    <source>
    </source>
</evidence>
<evidence type="ECO:0000269" key="5">
    <source>
    </source>
</evidence>
<evidence type="ECO:0000269" key="6">
    <source>
    </source>
</evidence>
<evidence type="ECO:0000269" key="7">
    <source>
    </source>
</evidence>
<evidence type="ECO:0000269" key="8">
    <source>
    </source>
</evidence>
<evidence type="ECO:0000269" key="9">
    <source>
    </source>
</evidence>
<evidence type="ECO:0000269" key="10">
    <source>
    </source>
</evidence>
<evidence type="ECO:0000269" key="11">
    <source>
    </source>
</evidence>
<evidence type="ECO:0000303" key="12">
    <source>
    </source>
</evidence>
<evidence type="ECO:0000303" key="13">
    <source>
    </source>
</evidence>
<evidence type="ECO:0000303" key="14">
    <source>
    </source>
</evidence>
<evidence type="ECO:0000303" key="15">
    <source>
    </source>
</evidence>
<evidence type="ECO:0000303" key="16">
    <source>
    </source>
</evidence>
<evidence type="ECO:0000305" key="17"/>
<evidence type="ECO:0000305" key="18">
    <source>
    </source>
</evidence>
<evidence type="ECO:0000312" key="19">
    <source>
        <dbReference type="EMBL" id="BAG32806.1"/>
    </source>
</evidence>
<evidence type="ECO:0000312" key="20">
    <source>
        <dbReference type="Proteomes" id="UP000008842"/>
    </source>
</evidence>
<evidence type="ECO:0007829" key="21">
    <source>
        <dbReference type="PDB" id="5NF2"/>
    </source>
</evidence>
<evidence type="ECO:0007829" key="22">
    <source>
        <dbReference type="PDB" id="5NF3"/>
    </source>
</evidence>